<feature type="chain" id="PRO_1000185512" description="Proline--tRNA ligase">
    <location>
        <begin position="1"/>
        <end position="618"/>
    </location>
</feature>
<evidence type="ECO:0000255" key="1">
    <source>
        <dbReference type="HAMAP-Rule" id="MF_01569"/>
    </source>
</evidence>
<comment type="function">
    <text evidence="1">Catalyzes the attachment of proline to tRNA(Pro) in a two-step reaction: proline is first activated by ATP to form Pro-AMP and then transferred to the acceptor end of tRNA(Pro). As ProRS can inadvertently accommodate and process non-cognate amino acids such as alanine and cysteine, to avoid such errors it has two additional distinct editing activities against alanine. One activity is designated as 'pretransfer' editing and involves the tRNA(Pro)-independent hydrolysis of activated Ala-AMP. The other activity is designated 'posttransfer' editing and involves deacylation of mischarged Ala-tRNA(Pro). The misacylated Cys-tRNA(Pro) is not edited by ProRS.</text>
</comment>
<comment type="catalytic activity">
    <reaction evidence="1">
        <text>tRNA(Pro) + L-proline + ATP = L-prolyl-tRNA(Pro) + AMP + diphosphate</text>
        <dbReference type="Rhea" id="RHEA:14305"/>
        <dbReference type="Rhea" id="RHEA-COMP:9700"/>
        <dbReference type="Rhea" id="RHEA-COMP:9702"/>
        <dbReference type="ChEBI" id="CHEBI:30616"/>
        <dbReference type="ChEBI" id="CHEBI:33019"/>
        <dbReference type="ChEBI" id="CHEBI:60039"/>
        <dbReference type="ChEBI" id="CHEBI:78442"/>
        <dbReference type="ChEBI" id="CHEBI:78532"/>
        <dbReference type="ChEBI" id="CHEBI:456215"/>
        <dbReference type="EC" id="6.1.1.15"/>
    </reaction>
</comment>
<comment type="subunit">
    <text evidence="1">Homodimer.</text>
</comment>
<comment type="subcellular location">
    <subcellularLocation>
        <location evidence="1">Cytoplasm</location>
    </subcellularLocation>
</comment>
<comment type="domain">
    <text evidence="1">Consists of three domains: the N-terminal catalytic domain, the editing domain and the C-terminal anticodon-binding domain.</text>
</comment>
<comment type="similarity">
    <text evidence="1">Belongs to the class-II aminoacyl-tRNA synthetase family. ProS type 1 subfamily.</text>
</comment>
<sequence length="618" mass="68785">MKQSKMLIPTLREMPSDAQVISHALMVRAGYVRQVSAGIYAYLPLAHRTIEKFKTIMRQEFDKIGAVEMLAPALLTADLWRESGRYETYGEDLYKLKNRDKSDFILGPTHEETFTTLVRDAVKSYKQLPLNLYQIQSKYRDEKRPRNGLLRTREFIMKDGYSFHQSYDDLDVTYDAYRQAYEAIFTRAGLDFKGIIGDGGAMGGKDSQEFMAITPDRTNLDRWLVLDKSIPSLADIPEEVLEEIKAELASWLVSGEDTIAYSSESSYAANLEMATSEYKSSSKVTALDDLVEIETPNCKTIDEVAAFLDVAEHQVIKTLLFMVDHEPVLALLVGNDQINAVKLKNHLGADFLEPASEEEARAILGAGFGSLGPVHLTDGIRIVADRKVQDLANAVAGANKDGYHLTGVNPNRDFQAEYADIREVKEGETSPDRHGVLQFARGIEIGHIFKLGTRYSDSMAANILDENGRAVPIVMGCYGIGVSRILSAVIEQHARLFVSKTPKGDYRYAWGINFPKELAPFDVHLITVNVKDQEAQDLTERVEASLMAKGYDVLTDDRNERVGSKFSDSDLIGLPIRVTIGKKAAEGIVEIKIKATGDSIEVHADSLIETLDILTKDN</sequence>
<reference key="1">
    <citation type="journal article" date="2009" name="PLoS Pathog.">
        <title>Genomic evidence for the evolution of Streptococcus equi: host restriction, increased virulence, and genetic exchange with human pathogens.</title>
        <authorList>
            <person name="Holden M.T.G."/>
            <person name="Heather Z."/>
            <person name="Paillot R."/>
            <person name="Steward K.F."/>
            <person name="Webb K."/>
            <person name="Ainslie F."/>
            <person name="Jourdan T."/>
            <person name="Bason N.C."/>
            <person name="Holroyd N.E."/>
            <person name="Mungall K."/>
            <person name="Quail M.A."/>
            <person name="Sanders M."/>
            <person name="Simmonds M."/>
            <person name="Willey D."/>
            <person name="Brooks K."/>
            <person name="Aanensen D.M."/>
            <person name="Spratt B.G."/>
            <person name="Jolley K.A."/>
            <person name="Maiden M.C.J."/>
            <person name="Kehoe M."/>
            <person name="Chanter N."/>
            <person name="Bentley S.D."/>
            <person name="Robinson C."/>
            <person name="Maskell D.J."/>
            <person name="Parkhill J."/>
            <person name="Waller A.S."/>
        </authorList>
    </citation>
    <scope>NUCLEOTIDE SEQUENCE [LARGE SCALE GENOMIC DNA]</scope>
    <source>
        <strain>4047</strain>
    </source>
</reference>
<proteinExistence type="inferred from homology"/>
<organism>
    <name type="scientific">Streptococcus equi subsp. equi (strain 4047)</name>
    <dbReference type="NCBI Taxonomy" id="553482"/>
    <lineage>
        <taxon>Bacteria</taxon>
        <taxon>Bacillati</taxon>
        <taxon>Bacillota</taxon>
        <taxon>Bacilli</taxon>
        <taxon>Lactobacillales</taxon>
        <taxon>Streptococcaceae</taxon>
        <taxon>Streptococcus</taxon>
    </lineage>
</organism>
<dbReference type="EC" id="6.1.1.15" evidence="1"/>
<dbReference type="EMBL" id="FM204883">
    <property type="protein sequence ID" value="CAW95268.1"/>
    <property type="molecule type" value="Genomic_DNA"/>
</dbReference>
<dbReference type="RefSeq" id="WP_015898574.1">
    <property type="nucleotide sequence ID" value="NC_012471.1"/>
</dbReference>
<dbReference type="SMR" id="C0M9E6"/>
<dbReference type="KEGG" id="seu:SEQ_2005"/>
<dbReference type="HOGENOM" id="CLU_016739_0_0_9"/>
<dbReference type="OrthoDB" id="9809052at2"/>
<dbReference type="Proteomes" id="UP000001365">
    <property type="component" value="Chromosome"/>
</dbReference>
<dbReference type="GO" id="GO:0005829">
    <property type="term" value="C:cytosol"/>
    <property type="evidence" value="ECO:0007669"/>
    <property type="project" value="TreeGrafter"/>
</dbReference>
<dbReference type="GO" id="GO:0002161">
    <property type="term" value="F:aminoacyl-tRNA deacylase activity"/>
    <property type="evidence" value="ECO:0007669"/>
    <property type="project" value="InterPro"/>
</dbReference>
<dbReference type="GO" id="GO:0005524">
    <property type="term" value="F:ATP binding"/>
    <property type="evidence" value="ECO:0007669"/>
    <property type="project" value="UniProtKB-UniRule"/>
</dbReference>
<dbReference type="GO" id="GO:0140096">
    <property type="term" value="F:catalytic activity, acting on a protein"/>
    <property type="evidence" value="ECO:0007669"/>
    <property type="project" value="UniProtKB-ARBA"/>
</dbReference>
<dbReference type="GO" id="GO:0004827">
    <property type="term" value="F:proline-tRNA ligase activity"/>
    <property type="evidence" value="ECO:0007669"/>
    <property type="project" value="UniProtKB-UniRule"/>
</dbReference>
<dbReference type="GO" id="GO:0016740">
    <property type="term" value="F:transferase activity"/>
    <property type="evidence" value="ECO:0007669"/>
    <property type="project" value="UniProtKB-ARBA"/>
</dbReference>
<dbReference type="GO" id="GO:0006433">
    <property type="term" value="P:prolyl-tRNA aminoacylation"/>
    <property type="evidence" value="ECO:0007669"/>
    <property type="project" value="UniProtKB-UniRule"/>
</dbReference>
<dbReference type="CDD" id="cd04334">
    <property type="entry name" value="ProRS-INS"/>
    <property type="match status" value="1"/>
</dbReference>
<dbReference type="CDD" id="cd00861">
    <property type="entry name" value="ProRS_anticodon_short"/>
    <property type="match status" value="1"/>
</dbReference>
<dbReference type="FunFam" id="3.40.50.800:FF:000011">
    <property type="entry name" value="Proline--tRNA ligase"/>
    <property type="match status" value="1"/>
</dbReference>
<dbReference type="Gene3D" id="3.40.50.800">
    <property type="entry name" value="Anticodon-binding domain"/>
    <property type="match status" value="1"/>
</dbReference>
<dbReference type="Gene3D" id="3.30.930.10">
    <property type="entry name" value="Bira Bifunctional Protein, Domain 2"/>
    <property type="match status" value="2"/>
</dbReference>
<dbReference type="Gene3D" id="3.90.960.10">
    <property type="entry name" value="YbaK/aminoacyl-tRNA synthetase-associated domain"/>
    <property type="match status" value="1"/>
</dbReference>
<dbReference type="HAMAP" id="MF_01569">
    <property type="entry name" value="Pro_tRNA_synth_type1"/>
    <property type="match status" value="1"/>
</dbReference>
<dbReference type="InterPro" id="IPR002314">
    <property type="entry name" value="aa-tRNA-synt_IIb"/>
</dbReference>
<dbReference type="InterPro" id="IPR006195">
    <property type="entry name" value="aa-tRNA-synth_II"/>
</dbReference>
<dbReference type="InterPro" id="IPR045864">
    <property type="entry name" value="aa-tRNA-synth_II/BPL/LPL"/>
</dbReference>
<dbReference type="InterPro" id="IPR004154">
    <property type="entry name" value="Anticodon-bd"/>
</dbReference>
<dbReference type="InterPro" id="IPR036621">
    <property type="entry name" value="Anticodon-bd_dom_sf"/>
</dbReference>
<dbReference type="InterPro" id="IPR002316">
    <property type="entry name" value="Pro-tRNA-ligase_IIa"/>
</dbReference>
<dbReference type="InterPro" id="IPR004500">
    <property type="entry name" value="Pro-tRNA-synth_IIa_bac-type"/>
</dbReference>
<dbReference type="InterPro" id="IPR023717">
    <property type="entry name" value="Pro-tRNA-Synthase_IIa_type1"/>
</dbReference>
<dbReference type="InterPro" id="IPR050062">
    <property type="entry name" value="Pro-tRNA_synthetase"/>
</dbReference>
<dbReference type="InterPro" id="IPR044140">
    <property type="entry name" value="ProRS_anticodon_short"/>
</dbReference>
<dbReference type="InterPro" id="IPR036754">
    <property type="entry name" value="YbaK/aa-tRNA-synt-asso_dom_sf"/>
</dbReference>
<dbReference type="InterPro" id="IPR007214">
    <property type="entry name" value="YbaK/aa-tRNA-synth-assoc-dom"/>
</dbReference>
<dbReference type="NCBIfam" id="NF006625">
    <property type="entry name" value="PRK09194.1"/>
    <property type="match status" value="1"/>
</dbReference>
<dbReference type="NCBIfam" id="TIGR00409">
    <property type="entry name" value="proS_fam_II"/>
    <property type="match status" value="2"/>
</dbReference>
<dbReference type="PANTHER" id="PTHR42753">
    <property type="entry name" value="MITOCHONDRIAL RIBOSOME PROTEIN L39/PROLYL-TRNA LIGASE FAMILY MEMBER"/>
    <property type="match status" value="1"/>
</dbReference>
<dbReference type="PANTHER" id="PTHR42753:SF2">
    <property type="entry name" value="PROLINE--TRNA LIGASE"/>
    <property type="match status" value="1"/>
</dbReference>
<dbReference type="Pfam" id="PF03129">
    <property type="entry name" value="HGTP_anticodon"/>
    <property type="match status" value="1"/>
</dbReference>
<dbReference type="Pfam" id="PF00587">
    <property type="entry name" value="tRNA-synt_2b"/>
    <property type="match status" value="1"/>
</dbReference>
<dbReference type="Pfam" id="PF04073">
    <property type="entry name" value="tRNA_edit"/>
    <property type="match status" value="1"/>
</dbReference>
<dbReference type="PRINTS" id="PR01046">
    <property type="entry name" value="TRNASYNTHPRO"/>
</dbReference>
<dbReference type="SUPFAM" id="SSF52954">
    <property type="entry name" value="Class II aaRS ABD-related"/>
    <property type="match status" value="1"/>
</dbReference>
<dbReference type="SUPFAM" id="SSF55681">
    <property type="entry name" value="Class II aaRS and biotin synthetases"/>
    <property type="match status" value="1"/>
</dbReference>
<dbReference type="SUPFAM" id="SSF55826">
    <property type="entry name" value="YbaK/ProRS associated domain"/>
    <property type="match status" value="1"/>
</dbReference>
<dbReference type="PROSITE" id="PS50862">
    <property type="entry name" value="AA_TRNA_LIGASE_II"/>
    <property type="match status" value="1"/>
</dbReference>
<protein>
    <recommendedName>
        <fullName evidence="1">Proline--tRNA ligase</fullName>
        <ecNumber evidence="1">6.1.1.15</ecNumber>
    </recommendedName>
    <alternativeName>
        <fullName evidence="1">Prolyl-tRNA synthetase</fullName>
        <shortName evidence="1">ProRS</shortName>
    </alternativeName>
</protein>
<name>SYP_STRE4</name>
<gene>
    <name evidence="1" type="primary">proS</name>
    <name type="ordered locus">SEQ_2005</name>
</gene>
<keyword id="KW-0030">Aminoacyl-tRNA synthetase</keyword>
<keyword id="KW-0067">ATP-binding</keyword>
<keyword id="KW-0963">Cytoplasm</keyword>
<keyword id="KW-0436">Ligase</keyword>
<keyword id="KW-0547">Nucleotide-binding</keyword>
<keyword id="KW-0648">Protein biosynthesis</keyword>
<accession>C0M9E6</accession>